<dbReference type="EMBL" id="M88166">
    <property type="protein sequence ID" value="AAA03608.1"/>
    <property type="molecule type" value="mRNA"/>
</dbReference>
<dbReference type="PIR" id="I51926">
    <property type="entry name" value="I51926"/>
</dbReference>
<dbReference type="FunCoup" id="P35323">
    <property type="interactions" value="16"/>
</dbReference>
<dbReference type="STRING" id="9823.ENSSSCP00000027207"/>
<dbReference type="PaxDb" id="9823-ENSSSCP00000027207"/>
<dbReference type="PeptideAtlas" id="P35323"/>
<dbReference type="eggNOG" id="ENOG502SCIR">
    <property type="taxonomic scope" value="Eukaryota"/>
</dbReference>
<dbReference type="InParanoid" id="P35323"/>
<dbReference type="Proteomes" id="UP000008227">
    <property type="component" value="Unplaced"/>
</dbReference>
<dbReference type="Proteomes" id="UP000314985">
    <property type="component" value="Unplaced"/>
</dbReference>
<dbReference type="Proteomes" id="UP000694570">
    <property type="component" value="Unplaced"/>
</dbReference>
<dbReference type="Proteomes" id="UP000694571">
    <property type="component" value="Unplaced"/>
</dbReference>
<dbReference type="Proteomes" id="UP000694720">
    <property type="component" value="Unplaced"/>
</dbReference>
<dbReference type="Proteomes" id="UP000694722">
    <property type="component" value="Unplaced"/>
</dbReference>
<dbReference type="Proteomes" id="UP000694723">
    <property type="component" value="Unplaced"/>
</dbReference>
<dbReference type="Proteomes" id="UP000694724">
    <property type="component" value="Unplaced"/>
</dbReference>
<dbReference type="Proteomes" id="UP000694725">
    <property type="component" value="Unplaced"/>
</dbReference>
<dbReference type="Proteomes" id="UP000694726">
    <property type="component" value="Unplaced"/>
</dbReference>
<dbReference type="Proteomes" id="UP000694727">
    <property type="component" value="Unplaced"/>
</dbReference>
<dbReference type="Proteomes" id="UP000694728">
    <property type="component" value="Unplaced"/>
</dbReference>
<dbReference type="GO" id="GO:0005737">
    <property type="term" value="C:cytoplasm"/>
    <property type="evidence" value="ECO:0007669"/>
    <property type="project" value="UniProtKB-SubCell"/>
</dbReference>
<dbReference type="GO" id="GO:0031424">
    <property type="term" value="P:keratinization"/>
    <property type="evidence" value="ECO:0007669"/>
    <property type="project" value="UniProtKB-KW"/>
</dbReference>
<dbReference type="Pfam" id="PF02389">
    <property type="entry name" value="Cornifin"/>
    <property type="match status" value="1"/>
</dbReference>
<dbReference type="PRINTS" id="PR00021">
    <property type="entry name" value="PRORICH"/>
</dbReference>
<evidence type="ECO:0000250" key="1">
    <source>
        <dbReference type="UniProtKB" id="Q9UBC9"/>
    </source>
</evidence>
<evidence type="ECO:0000256" key="2">
    <source>
        <dbReference type="SAM" id="MobiDB-lite"/>
    </source>
</evidence>
<evidence type="ECO:0000305" key="3"/>
<proteinExistence type="evidence at transcript level"/>
<feature type="initiator methionine" description="Removed" evidence="1">
    <location>
        <position position="1"/>
    </location>
</feature>
<feature type="chain" id="PRO_0000150001" description="Cornifin">
    <location>
        <begin position="2"/>
        <end position="97"/>
    </location>
</feature>
<feature type="repeat" description="1">
    <location>
        <begin position="3"/>
        <end position="14"/>
    </location>
</feature>
<feature type="repeat" description="2">
    <location>
        <begin position="18"/>
        <end position="29"/>
    </location>
</feature>
<feature type="repeat" description="1">
    <location>
        <begin position="31"/>
        <end position="38"/>
    </location>
</feature>
<feature type="repeat" description="2">
    <location>
        <begin position="39"/>
        <end position="46"/>
    </location>
</feature>
<feature type="repeat" description="3">
    <location>
        <begin position="47"/>
        <end position="54"/>
    </location>
</feature>
<feature type="repeat" description="4">
    <location>
        <begin position="55"/>
        <end position="62"/>
    </location>
</feature>
<feature type="repeat" description="5">
    <location>
        <begin position="63"/>
        <end position="70"/>
    </location>
</feature>
<feature type="repeat" description="6">
    <location>
        <begin position="71"/>
        <end position="78"/>
    </location>
</feature>
<feature type="repeat" description="7">
    <location>
        <begin position="79"/>
        <end position="85"/>
    </location>
</feature>
<feature type="region of interest" description="Disordered" evidence="2">
    <location>
        <begin position="1"/>
        <end position="42"/>
    </location>
</feature>
<feature type="region of interest" description="2 X 12 AA approximate repeats">
    <location>
        <begin position="3"/>
        <end position="29"/>
    </location>
</feature>
<feature type="region of interest" description="7 X 8 AA approximate tandem repeats">
    <location>
        <begin position="31"/>
        <end position="85"/>
    </location>
</feature>
<feature type="modified residue" description="N-acetylserine" evidence="1">
    <location>
        <position position="2"/>
    </location>
</feature>
<reference key="1">
    <citation type="journal article" date="1993" name="Am. J. Respir. Cell Mol. Biol.">
        <title>A small proline-rich protein regulated by vitamin A in tracheal epithelial cells is induced in lung tumors.</title>
        <authorList>
            <person name="Tesfaigzi J."/>
            <person name="Wright P.S."/>
            <person name="Oreffo V."/>
            <person name="An G."/>
            <person name="Wu R."/>
            <person name="Carlson D.M."/>
        </authorList>
    </citation>
    <scope>NUCLEOTIDE SEQUENCE [MRNA]</scope>
    <source>
        <tissue>Trachea</tissue>
    </source>
</reference>
<organism>
    <name type="scientific">Sus scrofa</name>
    <name type="common">Pig</name>
    <dbReference type="NCBI Taxonomy" id="9823"/>
    <lineage>
        <taxon>Eukaryota</taxon>
        <taxon>Metazoa</taxon>
        <taxon>Chordata</taxon>
        <taxon>Craniata</taxon>
        <taxon>Vertebrata</taxon>
        <taxon>Euteleostomi</taxon>
        <taxon>Mammalia</taxon>
        <taxon>Eutheria</taxon>
        <taxon>Laurasiatheria</taxon>
        <taxon>Artiodactyla</taxon>
        <taxon>Suina</taxon>
        <taxon>Suidae</taxon>
        <taxon>Sus</taxon>
    </lineage>
</organism>
<comment type="function">
    <text>Cross-linked envelope protein of keratinocytes. It is a keratinocyte protein that first appears in the cell cytosol, but ultimately becomes cross-linked to membrane proteins by transglutaminase. All that results in the formation of an insoluble envelope beneath the plasma membrane.</text>
</comment>
<comment type="subcellular location">
    <subcellularLocation>
        <location>Cytoplasm</location>
    </subcellularLocation>
</comment>
<comment type="tissue specificity">
    <text>Not detected in normal lung tissue but seen in tumor tissues. Cells around the keratin pearls contain high levels.</text>
</comment>
<comment type="induction">
    <text>During squamous differentiation of epidermal keratinocytes.</text>
</comment>
<comment type="similarity">
    <text evidence="3">Belongs to the cornifin (SPRR) family.</text>
</comment>
<gene>
    <name type="primary">SPRP</name>
</gene>
<keyword id="KW-0007">Acetylation</keyword>
<keyword id="KW-0963">Cytoplasm</keyword>
<keyword id="KW-0417">Keratinization</keyword>
<keyword id="KW-1185">Reference proteome</keyword>
<keyword id="KW-0677">Repeat</keyword>
<name>SPRR1_PIG</name>
<protein>
    <recommendedName>
        <fullName>Cornifin</fullName>
    </recommendedName>
    <alternativeName>
        <fullName>SPRP</fullName>
    </alternativeName>
    <alternativeName>
        <fullName>Small proline-rich protein I</fullName>
        <shortName>SPR-I</shortName>
    </alternativeName>
    <alternativeName>
        <fullName>Small proline-rich squamous cell marker</fullName>
    </alternativeName>
</protein>
<accession>P35323</accession>
<sequence length="97" mass="10724">MSSQQQKQPCTPPPQPQQQQVKQPCQPPPQEPCVPKTKEPCHPKVPEPCQPKVPEPCQPKVPEPCHPKVPEPCQPKVPEPCPSPVIPAPAQQKTKQK</sequence>